<dbReference type="EC" id="2.5.1.75" evidence="1"/>
<dbReference type="EMBL" id="CP000879">
    <property type="protein sequence ID" value="ABX32084.1"/>
    <property type="molecule type" value="Genomic_DNA"/>
</dbReference>
<dbReference type="RefSeq" id="WP_012209183.1">
    <property type="nucleotide sequence ID" value="NC_010003.1"/>
</dbReference>
<dbReference type="SMR" id="A9BHW9"/>
<dbReference type="STRING" id="403833.Pmob_1380"/>
<dbReference type="KEGG" id="pmo:Pmob_1380"/>
<dbReference type="eggNOG" id="COG0324">
    <property type="taxonomic scope" value="Bacteria"/>
</dbReference>
<dbReference type="HOGENOM" id="CLU_032616_0_1_0"/>
<dbReference type="OrthoDB" id="9776390at2"/>
<dbReference type="Proteomes" id="UP000000789">
    <property type="component" value="Chromosome"/>
</dbReference>
<dbReference type="GO" id="GO:0005524">
    <property type="term" value="F:ATP binding"/>
    <property type="evidence" value="ECO:0007669"/>
    <property type="project" value="UniProtKB-UniRule"/>
</dbReference>
<dbReference type="GO" id="GO:0052381">
    <property type="term" value="F:tRNA dimethylallyltransferase activity"/>
    <property type="evidence" value="ECO:0007669"/>
    <property type="project" value="UniProtKB-UniRule"/>
</dbReference>
<dbReference type="GO" id="GO:0006400">
    <property type="term" value="P:tRNA modification"/>
    <property type="evidence" value="ECO:0007669"/>
    <property type="project" value="TreeGrafter"/>
</dbReference>
<dbReference type="Gene3D" id="1.10.20.140">
    <property type="match status" value="1"/>
</dbReference>
<dbReference type="Gene3D" id="3.40.50.300">
    <property type="entry name" value="P-loop containing nucleotide triphosphate hydrolases"/>
    <property type="match status" value="1"/>
</dbReference>
<dbReference type="HAMAP" id="MF_00185">
    <property type="entry name" value="IPP_trans"/>
    <property type="match status" value="1"/>
</dbReference>
<dbReference type="InterPro" id="IPR039657">
    <property type="entry name" value="Dimethylallyltransferase"/>
</dbReference>
<dbReference type="InterPro" id="IPR018022">
    <property type="entry name" value="IPT"/>
</dbReference>
<dbReference type="InterPro" id="IPR027417">
    <property type="entry name" value="P-loop_NTPase"/>
</dbReference>
<dbReference type="NCBIfam" id="TIGR00174">
    <property type="entry name" value="miaA"/>
    <property type="match status" value="1"/>
</dbReference>
<dbReference type="PANTHER" id="PTHR11088">
    <property type="entry name" value="TRNA DIMETHYLALLYLTRANSFERASE"/>
    <property type="match status" value="1"/>
</dbReference>
<dbReference type="PANTHER" id="PTHR11088:SF60">
    <property type="entry name" value="TRNA DIMETHYLALLYLTRANSFERASE"/>
    <property type="match status" value="1"/>
</dbReference>
<dbReference type="Pfam" id="PF01715">
    <property type="entry name" value="IPPT"/>
    <property type="match status" value="1"/>
</dbReference>
<dbReference type="SUPFAM" id="SSF52540">
    <property type="entry name" value="P-loop containing nucleoside triphosphate hydrolases"/>
    <property type="match status" value="2"/>
</dbReference>
<accession>A9BHW9</accession>
<reference key="1">
    <citation type="submission" date="2007-11" db="EMBL/GenBank/DDBJ databases">
        <title>Complete sequence of Petroga mobilis SJ95.</title>
        <authorList>
            <consortium name="US DOE Joint Genome Institute"/>
            <person name="Copeland A."/>
            <person name="Lucas S."/>
            <person name="Lapidus A."/>
            <person name="Barry K."/>
            <person name="Glavina del Rio T."/>
            <person name="Dalin E."/>
            <person name="Tice H."/>
            <person name="Pitluck S."/>
            <person name="Meincke L."/>
            <person name="Brettin T."/>
            <person name="Bruce D."/>
            <person name="Detter J.C."/>
            <person name="Han C."/>
            <person name="Kuske C.R."/>
            <person name="Schmutz J."/>
            <person name="Larimer F."/>
            <person name="Land M."/>
            <person name="Hauser L."/>
            <person name="Kyrpides N."/>
            <person name="Mikhailova N."/>
            <person name="Noll K."/>
            <person name="Richardson P."/>
        </authorList>
    </citation>
    <scope>NUCLEOTIDE SEQUENCE [LARGE SCALE GENOMIC DNA]</scope>
    <source>
        <strain>DSM 10674 / SJ95</strain>
    </source>
</reference>
<feature type="chain" id="PRO_1000077399" description="tRNA dimethylallyltransferase">
    <location>
        <begin position="1"/>
        <end position="303"/>
    </location>
</feature>
<feature type="region of interest" description="Interaction with substrate tRNA" evidence="1">
    <location>
        <begin position="34"/>
        <end position="37"/>
    </location>
</feature>
<feature type="binding site" evidence="1">
    <location>
        <begin position="9"/>
        <end position="16"/>
    </location>
    <ligand>
        <name>ATP</name>
        <dbReference type="ChEBI" id="CHEBI:30616"/>
    </ligand>
</feature>
<feature type="binding site" evidence="1">
    <location>
        <begin position="11"/>
        <end position="16"/>
    </location>
    <ligand>
        <name>substrate</name>
    </ligand>
</feature>
<feature type="site" description="Interaction with substrate tRNA" evidence="1">
    <location>
        <position position="100"/>
    </location>
</feature>
<organism>
    <name type="scientific">Petrotoga mobilis (strain DSM 10674 / SJ95)</name>
    <dbReference type="NCBI Taxonomy" id="403833"/>
    <lineage>
        <taxon>Bacteria</taxon>
        <taxon>Thermotogati</taxon>
        <taxon>Thermotogota</taxon>
        <taxon>Thermotogae</taxon>
        <taxon>Petrotogales</taxon>
        <taxon>Petrotogaceae</taxon>
        <taxon>Petrotoga</taxon>
    </lineage>
</organism>
<sequence>MNKVLVIAGPTAVGKTEISIEIARRINGEIICMDSRQIYSHLIIGTATPDEETKKLVPHHLYGSVDPRTHFTAFDYKKLAEKKIGEVLNRGNTPVLVGGTGLYLDALRKGFLNVKSDYGLRTYLRKLETNNPGVLRKILVDLDPQRAQKIHPNDLKRIIRAIEIYVITGIKMGEIVKENRQDENSFDYHIIVLDRERQELHERINKRVHQMIDEGLIEEVRNLLSLGYSTTLNALNTIGYKEVVQYLYGKIDFNEMVHQIKVNTRNYARRQIIYFRKIEGAKWINLSKTSQEEVVDQILSEFI</sequence>
<evidence type="ECO:0000255" key="1">
    <source>
        <dbReference type="HAMAP-Rule" id="MF_00185"/>
    </source>
</evidence>
<comment type="function">
    <text evidence="1">Catalyzes the transfer of a dimethylallyl group onto the adenine at position 37 in tRNAs that read codons beginning with uridine, leading to the formation of N6-(dimethylallyl)adenosine (i(6)A).</text>
</comment>
<comment type="catalytic activity">
    <reaction evidence="1">
        <text>adenosine(37) in tRNA + dimethylallyl diphosphate = N(6)-dimethylallyladenosine(37) in tRNA + diphosphate</text>
        <dbReference type="Rhea" id="RHEA:26482"/>
        <dbReference type="Rhea" id="RHEA-COMP:10162"/>
        <dbReference type="Rhea" id="RHEA-COMP:10375"/>
        <dbReference type="ChEBI" id="CHEBI:33019"/>
        <dbReference type="ChEBI" id="CHEBI:57623"/>
        <dbReference type="ChEBI" id="CHEBI:74411"/>
        <dbReference type="ChEBI" id="CHEBI:74415"/>
        <dbReference type="EC" id="2.5.1.75"/>
    </reaction>
</comment>
<comment type="cofactor">
    <cofactor evidence="1">
        <name>Mg(2+)</name>
        <dbReference type="ChEBI" id="CHEBI:18420"/>
    </cofactor>
</comment>
<comment type="subunit">
    <text evidence="1">Monomer.</text>
</comment>
<comment type="similarity">
    <text evidence="1">Belongs to the IPP transferase family.</text>
</comment>
<keyword id="KW-0067">ATP-binding</keyword>
<keyword id="KW-0460">Magnesium</keyword>
<keyword id="KW-0547">Nucleotide-binding</keyword>
<keyword id="KW-0808">Transferase</keyword>
<keyword id="KW-0819">tRNA processing</keyword>
<protein>
    <recommendedName>
        <fullName evidence="1">tRNA dimethylallyltransferase</fullName>
        <ecNumber evidence="1">2.5.1.75</ecNumber>
    </recommendedName>
    <alternativeName>
        <fullName evidence="1">Dimethylallyl diphosphate:tRNA dimethylallyltransferase</fullName>
        <shortName evidence="1">DMAPP:tRNA dimethylallyltransferase</shortName>
        <shortName evidence="1">DMATase</shortName>
    </alternativeName>
    <alternativeName>
        <fullName evidence="1">Isopentenyl-diphosphate:tRNA isopentenyltransferase</fullName>
        <shortName evidence="1">IPP transferase</shortName>
        <shortName evidence="1">IPPT</shortName>
        <shortName evidence="1">IPTase</shortName>
    </alternativeName>
</protein>
<gene>
    <name evidence="1" type="primary">miaA</name>
    <name type="ordered locus">Pmob_1380</name>
</gene>
<proteinExistence type="inferred from homology"/>
<name>MIAA_PETMO</name>